<gene>
    <name evidence="1" type="primary">aguA</name>
    <name type="ordered locus">Pput_0281</name>
</gene>
<keyword id="KW-0378">Hydrolase</keyword>
<keyword id="KW-0620">Polyamine biosynthesis</keyword>
<feature type="chain" id="PRO_1000070564" description="Agmatine deiminase">
    <location>
        <begin position="1"/>
        <end position="368"/>
    </location>
</feature>
<feature type="active site" description="Amidino-cysteine intermediate" evidence="1">
    <location>
        <position position="357"/>
    </location>
</feature>
<protein>
    <recommendedName>
        <fullName evidence="1">Agmatine deiminase</fullName>
        <ecNumber evidence="1">3.5.3.12</ecNumber>
    </recommendedName>
    <alternativeName>
        <fullName evidence="1">Agmatine iminohydrolase</fullName>
    </alternativeName>
</protein>
<proteinExistence type="inferred from homology"/>
<evidence type="ECO:0000255" key="1">
    <source>
        <dbReference type="HAMAP-Rule" id="MF_01841"/>
    </source>
</evidence>
<accession>A5VX45</accession>
<dbReference type="EC" id="3.5.3.12" evidence="1"/>
<dbReference type="EMBL" id="CP000712">
    <property type="protein sequence ID" value="ABQ76455.1"/>
    <property type="molecule type" value="Genomic_DNA"/>
</dbReference>
<dbReference type="SMR" id="A5VX45"/>
<dbReference type="KEGG" id="ppf:Pput_0281"/>
<dbReference type="eggNOG" id="COG2957">
    <property type="taxonomic scope" value="Bacteria"/>
</dbReference>
<dbReference type="HOGENOM" id="CLU_037682_1_0_6"/>
<dbReference type="UniPathway" id="UPA00534">
    <property type="reaction ID" value="UER00285"/>
</dbReference>
<dbReference type="GO" id="GO:0047632">
    <property type="term" value="F:agmatine deiminase activity"/>
    <property type="evidence" value="ECO:0007669"/>
    <property type="project" value="UniProtKB-UniRule"/>
</dbReference>
<dbReference type="GO" id="GO:0004668">
    <property type="term" value="F:protein-arginine deiminase activity"/>
    <property type="evidence" value="ECO:0007669"/>
    <property type="project" value="InterPro"/>
</dbReference>
<dbReference type="GO" id="GO:0033388">
    <property type="term" value="P:putrescine biosynthetic process from arginine"/>
    <property type="evidence" value="ECO:0007669"/>
    <property type="project" value="UniProtKB-UniRule"/>
</dbReference>
<dbReference type="Gene3D" id="3.75.10.10">
    <property type="entry name" value="L-arginine/glycine Amidinotransferase, Chain A"/>
    <property type="match status" value="1"/>
</dbReference>
<dbReference type="HAMAP" id="MF_01841">
    <property type="entry name" value="Agmatine_deimin"/>
    <property type="match status" value="1"/>
</dbReference>
<dbReference type="InterPro" id="IPR017754">
    <property type="entry name" value="Agmatine_deiminase"/>
</dbReference>
<dbReference type="InterPro" id="IPR007466">
    <property type="entry name" value="Peptidyl-Arg-deiminase_porph"/>
</dbReference>
<dbReference type="NCBIfam" id="TIGR03380">
    <property type="entry name" value="agmatine_aguA"/>
    <property type="match status" value="1"/>
</dbReference>
<dbReference type="NCBIfam" id="NF010070">
    <property type="entry name" value="PRK13551.1"/>
    <property type="match status" value="1"/>
</dbReference>
<dbReference type="PANTHER" id="PTHR31377">
    <property type="entry name" value="AGMATINE DEIMINASE-RELATED"/>
    <property type="match status" value="1"/>
</dbReference>
<dbReference type="PANTHER" id="PTHR31377:SF0">
    <property type="entry name" value="AGMATINE DEIMINASE-RELATED"/>
    <property type="match status" value="1"/>
</dbReference>
<dbReference type="Pfam" id="PF04371">
    <property type="entry name" value="PAD_porph"/>
    <property type="match status" value="1"/>
</dbReference>
<dbReference type="SUPFAM" id="SSF55909">
    <property type="entry name" value="Pentein"/>
    <property type="match status" value="1"/>
</dbReference>
<organism>
    <name type="scientific">Pseudomonas putida (strain ATCC 700007 / DSM 6899 / JCM 31910 / BCRC 17059 / LMG 24140 / F1)</name>
    <dbReference type="NCBI Taxonomy" id="351746"/>
    <lineage>
        <taxon>Bacteria</taxon>
        <taxon>Pseudomonadati</taxon>
        <taxon>Pseudomonadota</taxon>
        <taxon>Gammaproteobacteria</taxon>
        <taxon>Pseudomonadales</taxon>
        <taxon>Pseudomonadaceae</taxon>
        <taxon>Pseudomonas</taxon>
    </lineage>
</organism>
<sequence length="368" mass="40767">MKTLNSTPRADGFHMPAEWAPQTQVWMVWPERPDNWRLGGKPAQAAHVTLAKAIARFEPVTVAASAGQYENARRQLDQPNIRVVEISNDDAWVRDTGPTFVINGHGEVRGVDWGFNAWGGFDGGLYAPWNRDEELAAKVLEMERCQRYQTEGFVLEGGSIHVDGEGTVITTEECLLNRNRNPHLSREQIEAVLRDHLAVDTVVWLPDGLYNDETDGHVDNFCCYVRPGEVLLAWTDDSNDPNYARCHAAMDVLKNTRDAKGREFIVHKMPIPGPLYATAEECAGVDQVAGSQERDPSVRLAGSYVNFLIVNGGIIAPSFDDPADAEARAILARIFPDHEVVMIPGRELLLGGGNIHCLTQQQPAPVKR</sequence>
<reference key="1">
    <citation type="submission" date="2007-05" db="EMBL/GenBank/DDBJ databases">
        <title>Complete sequence of Pseudomonas putida F1.</title>
        <authorList>
            <consortium name="US DOE Joint Genome Institute"/>
            <person name="Copeland A."/>
            <person name="Lucas S."/>
            <person name="Lapidus A."/>
            <person name="Barry K."/>
            <person name="Detter J.C."/>
            <person name="Glavina del Rio T."/>
            <person name="Hammon N."/>
            <person name="Israni S."/>
            <person name="Dalin E."/>
            <person name="Tice H."/>
            <person name="Pitluck S."/>
            <person name="Chain P."/>
            <person name="Malfatti S."/>
            <person name="Shin M."/>
            <person name="Vergez L."/>
            <person name="Schmutz J."/>
            <person name="Larimer F."/>
            <person name="Land M."/>
            <person name="Hauser L."/>
            <person name="Kyrpides N."/>
            <person name="Lykidis A."/>
            <person name="Parales R."/>
            <person name="Richardson P."/>
        </authorList>
    </citation>
    <scope>NUCLEOTIDE SEQUENCE [LARGE SCALE GENOMIC DNA]</scope>
    <source>
        <strain>ATCC 700007 / DSM 6899 / JCM 31910 / BCRC 17059 / LMG 24140 / F1</strain>
    </source>
</reference>
<comment type="function">
    <text evidence="1">Mediates the hydrolysis of agmatine into N-carbamoylputrescine in the arginine decarboxylase (ADC) pathway of putrescine biosynthesis, a basic polyamine.</text>
</comment>
<comment type="catalytic activity">
    <reaction evidence="1">
        <text>agmatine + H2O = N-carbamoylputrescine + NH4(+)</text>
        <dbReference type="Rhea" id="RHEA:18037"/>
        <dbReference type="ChEBI" id="CHEBI:15377"/>
        <dbReference type="ChEBI" id="CHEBI:28938"/>
        <dbReference type="ChEBI" id="CHEBI:58145"/>
        <dbReference type="ChEBI" id="CHEBI:58318"/>
        <dbReference type="EC" id="3.5.3.12"/>
    </reaction>
</comment>
<comment type="pathway">
    <text evidence="1">Amine and polyamine biosynthesis; putrescine biosynthesis via agmatine pathway; N-carbamoylputrescine from agmatine: step 1/1.</text>
</comment>
<comment type="subunit">
    <text evidence="1">Homodimer.</text>
</comment>
<comment type="similarity">
    <text evidence="1">Belongs to the agmatine deiminase family.</text>
</comment>
<name>AGUA_PSEP1</name>